<evidence type="ECO:0000250" key="1"/>
<evidence type="ECO:0000250" key="2">
    <source>
        <dbReference type="UniProtKB" id="O08689"/>
    </source>
</evidence>
<evidence type="ECO:0000255" key="3"/>
<evidence type="ECO:0000305" key="4"/>
<sequence length="375" mass="42667">MQKLAVYVYIYLFMLISVDPVALDDGSQPTENAEKDGLCNACTWRQNTKSSRIEAIKIQILSKLRLEQAPNISRDVIKQLLPKAPPLQELIDQYDVQRDDSSDGSLEDDDYHATTETIITMPTESDFLVQMEGKPKCCFFKFSSKIQYNKVVKAQLWIYLRQVQKPTTVFVQILRLIKPMKDGTRYTGIRSLKLDIDPGAGFGQSIDVKTVLQNWLKQPESNLGIEIKAFDENGRDLAVTFPGPGEDGLNPFLEVRVTDTPKRSRRDFGLDCDEHSTESRCCRYPLTVDFEAFGWDWIIAPKRYKANYCFGECEFVFLQKYPHTHLVHQANPRGSAGPCCTPTKMSPINMLYFNGKEQIIYGKIPAMVVDRCGCS</sequence>
<keyword id="KW-0165">Cleavage on pair of basic residues</keyword>
<keyword id="KW-0202">Cytokine</keyword>
<keyword id="KW-1015">Disulfide bond</keyword>
<keyword id="KW-0325">Glycoprotein</keyword>
<keyword id="KW-0339">Growth factor</keyword>
<keyword id="KW-0964">Secreted</keyword>
<keyword id="KW-0732">Signal</keyword>
<dbReference type="EMBL" id="AF440862">
    <property type="protein sequence ID" value="AAL35276.1"/>
    <property type="molecule type" value="mRNA"/>
</dbReference>
<dbReference type="SMR" id="Q8UWD9"/>
<dbReference type="GlyCosmos" id="Q8UWD9">
    <property type="glycosylation" value="1 site, No reported glycans"/>
</dbReference>
<dbReference type="GO" id="GO:0005615">
    <property type="term" value="C:extracellular space"/>
    <property type="evidence" value="ECO:0000250"/>
    <property type="project" value="AgBase"/>
</dbReference>
<dbReference type="GO" id="GO:0005125">
    <property type="term" value="F:cytokine activity"/>
    <property type="evidence" value="ECO:0007669"/>
    <property type="project" value="UniProtKB-KW"/>
</dbReference>
<dbReference type="GO" id="GO:0008083">
    <property type="term" value="F:growth factor activity"/>
    <property type="evidence" value="ECO:0007669"/>
    <property type="project" value="UniProtKB-KW"/>
</dbReference>
<dbReference type="GO" id="GO:0033002">
    <property type="term" value="P:muscle cell proliferation"/>
    <property type="evidence" value="ECO:0000250"/>
    <property type="project" value="AgBase"/>
</dbReference>
<dbReference type="GO" id="GO:2000818">
    <property type="term" value="P:negative regulation of myoblast proliferation"/>
    <property type="evidence" value="ECO:0000250"/>
    <property type="project" value="AgBase"/>
</dbReference>
<dbReference type="GO" id="GO:1902725">
    <property type="term" value="P:negative regulation of satellite cell differentiation"/>
    <property type="evidence" value="ECO:0000250"/>
    <property type="project" value="AgBase"/>
</dbReference>
<dbReference type="GO" id="GO:1902723">
    <property type="term" value="P:negative regulation of skeletal muscle satellite cell proliferation"/>
    <property type="evidence" value="ECO:0000250"/>
    <property type="project" value="AgBase"/>
</dbReference>
<dbReference type="CDD" id="cd19388">
    <property type="entry name" value="TGF_beta_GDF8"/>
    <property type="match status" value="1"/>
</dbReference>
<dbReference type="FunFam" id="2.60.120.970:FF:000001">
    <property type="entry name" value="Growth/differentiation factor 8"/>
    <property type="match status" value="1"/>
</dbReference>
<dbReference type="FunFam" id="2.10.90.10:FF:000006">
    <property type="entry name" value="growth/differentiation factor 8"/>
    <property type="match status" value="1"/>
</dbReference>
<dbReference type="Gene3D" id="2.60.120.970">
    <property type="match status" value="1"/>
</dbReference>
<dbReference type="Gene3D" id="2.10.90.10">
    <property type="entry name" value="Cystine-knot cytokines"/>
    <property type="match status" value="1"/>
</dbReference>
<dbReference type="InterPro" id="IPR029034">
    <property type="entry name" value="Cystine-knot_cytokine"/>
</dbReference>
<dbReference type="InterPro" id="IPR001839">
    <property type="entry name" value="TGF-b_C"/>
</dbReference>
<dbReference type="InterPro" id="IPR001111">
    <property type="entry name" value="TGF-b_propeptide"/>
</dbReference>
<dbReference type="InterPro" id="IPR015615">
    <property type="entry name" value="TGF-beta-rel"/>
</dbReference>
<dbReference type="InterPro" id="IPR017948">
    <property type="entry name" value="TGFb_CS"/>
</dbReference>
<dbReference type="PANTHER" id="PTHR11848:SF150">
    <property type="entry name" value="GROWTH_DIFFERENTIATION FACTOR 8"/>
    <property type="match status" value="1"/>
</dbReference>
<dbReference type="PANTHER" id="PTHR11848">
    <property type="entry name" value="TGF-BETA FAMILY"/>
    <property type="match status" value="1"/>
</dbReference>
<dbReference type="Pfam" id="PF00019">
    <property type="entry name" value="TGF_beta"/>
    <property type="match status" value="1"/>
</dbReference>
<dbReference type="Pfam" id="PF00688">
    <property type="entry name" value="TGFb_propeptide"/>
    <property type="match status" value="1"/>
</dbReference>
<dbReference type="SMART" id="SM00204">
    <property type="entry name" value="TGFB"/>
    <property type="match status" value="1"/>
</dbReference>
<dbReference type="SUPFAM" id="SSF57501">
    <property type="entry name" value="Cystine-knot cytokines"/>
    <property type="match status" value="1"/>
</dbReference>
<dbReference type="PROSITE" id="PS00250">
    <property type="entry name" value="TGF_BETA_1"/>
    <property type="match status" value="1"/>
</dbReference>
<dbReference type="PROSITE" id="PS51362">
    <property type="entry name" value="TGF_BETA_2"/>
    <property type="match status" value="1"/>
</dbReference>
<name>GDF8_ANSAN</name>
<accession>Q8UWD9</accession>
<comment type="function">
    <text evidence="1">Acts specifically as a negative regulator of skeletal muscle growth.</text>
</comment>
<comment type="subunit">
    <text evidence="1">Homodimer; disulfide-linked.</text>
</comment>
<comment type="subcellular location">
    <subcellularLocation>
        <location evidence="1">Secreted</location>
    </subcellularLocation>
</comment>
<comment type="similarity">
    <text evidence="4">Belongs to the TGF-beta family.</text>
</comment>
<reference key="1">
    <citation type="submission" date="2001-10" db="EMBL/GenBank/DDBJ databases">
        <title>Molecular cloning and tissue distribution of the myostatin gene in duck, goose, pigeon and quail.</title>
        <authorList>
            <person name="Gu Z."/>
            <person name="Yang W."/>
            <person name="Cheng Z."/>
            <person name="Li H."/>
            <person name="Zhu D."/>
        </authorList>
    </citation>
    <scope>NUCLEOTIDE SEQUENCE [MRNA]</scope>
</reference>
<proteinExistence type="evidence at transcript level"/>
<feature type="signal peptide" evidence="3">
    <location>
        <begin position="1"/>
        <end position="23"/>
    </location>
</feature>
<feature type="propeptide" id="PRO_0000247000" evidence="3">
    <location>
        <begin position="24"/>
        <end position="266"/>
    </location>
</feature>
<feature type="chain" id="PRO_0000247001" description="Growth/differentiation factor 8">
    <location>
        <begin position="267"/>
        <end position="375"/>
    </location>
</feature>
<feature type="glycosylation site" description="N-linked (GlcNAc...) asparagine" evidence="3">
    <location>
        <position position="71"/>
    </location>
</feature>
<feature type="disulfide bond" evidence="2">
    <location>
        <begin position="272"/>
        <end position="282"/>
    </location>
</feature>
<feature type="disulfide bond" evidence="1">
    <location>
        <begin position="281"/>
        <end position="340"/>
    </location>
</feature>
<feature type="disulfide bond" evidence="1">
    <location>
        <begin position="309"/>
        <end position="372"/>
    </location>
</feature>
<feature type="disulfide bond" evidence="1">
    <location>
        <begin position="313"/>
        <end position="374"/>
    </location>
</feature>
<feature type="disulfide bond" description="Interchain" evidence="1">
    <location>
        <position position="339"/>
    </location>
</feature>
<protein>
    <recommendedName>
        <fullName>Growth/differentiation factor 8</fullName>
        <shortName>GDF-8</shortName>
    </recommendedName>
    <alternativeName>
        <fullName>Myostatin</fullName>
    </alternativeName>
</protein>
<gene>
    <name type="primary">MSTN</name>
    <name type="synonym">GDF8</name>
</gene>
<organism>
    <name type="scientific">Anser anser anser</name>
    <name type="common">Western greylag goose</name>
    <dbReference type="NCBI Taxonomy" id="8844"/>
    <lineage>
        <taxon>Eukaryota</taxon>
        <taxon>Metazoa</taxon>
        <taxon>Chordata</taxon>
        <taxon>Craniata</taxon>
        <taxon>Vertebrata</taxon>
        <taxon>Euteleostomi</taxon>
        <taxon>Archelosauria</taxon>
        <taxon>Archosauria</taxon>
        <taxon>Dinosauria</taxon>
        <taxon>Saurischia</taxon>
        <taxon>Theropoda</taxon>
        <taxon>Coelurosauria</taxon>
        <taxon>Aves</taxon>
        <taxon>Neognathae</taxon>
        <taxon>Galloanserae</taxon>
        <taxon>Anseriformes</taxon>
        <taxon>Anatidae</taxon>
        <taxon>Anserinae</taxon>
        <taxon>Anser</taxon>
    </lineage>
</organism>